<keyword id="KW-0067">ATP-binding</keyword>
<keyword id="KW-0963">Cytoplasm</keyword>
<keyword id="KW-0324">Glycolysis</keyword>
<keyword id="KW-0418">Kinase</keyword>
<keyword id="KW-0547">Nucleotide-binding</keyword>
<keyword id="KW-0808">Transferase</keyword>
<proteinExistence type="inferred from homology"/>
<sequence length="321" mass="34595">MTKYALVGDVGGTNARLALCDIASGEISQAKTYSGLDYPSLEAVVRVYLDEHSVSVEDGCIAIACPITGDWVAMTNHTWAFSIAEMKKNLGFSHLEIINDFTAVSMAIPMLKKEHLIQFGGGEPVDGKPIAVYGAGTGLGVAHLVHVDKRWISLPGEGGHVDFAPNSEEEAMILEILRAEIGHVSAERVLSGPGLVNLYRAIVKSDNRLPENLRPKDITERALADSCIDCRRALSLFCVIMGRFGGDLALTMGTFGGVYIAGGIVPRFLEFFKASGFRGGFEDKGRFKDYVHGIPVYLIVHDNPGLLGSGAHLRQTLGHIL</sequence>
<dbReference type="EC" id="2.7.1.2" evidence="1"/>
<dbReference type="EMBL" id="AM933173">
    <property type="protein sequence ID" value="CAR38267.1"/>
    <property type="molecule type" value="Genomic_DNA"/>
</dbReference>
<dbReference type="RefSeq" id="WP_000170380.1">
    <property type="nucleotide sequence ID" value="NC_011274.1"/>
</dbReference>
<dbReference type="SMR" id="B5RCN1"/>
<dbReference type="KEGG" id="seg:SG2439"/>
<dbReference type="HOGENOM" id="CLU_042582_1_0_6"/>
<dbReference type="Proteomes" id="UP000008321">
    <property type="component" value="Chromosome"/>
</dbReference>
<dbReference type="GO" id="GO:0005829">
    <property type="term" value="C:cytosol"/>
    <property type="evidence" value="ECO:0007669"/>
    <property type="project" value="TreeGrafter"/>
</dbReference>
<dbReference type="GO" id="GO:0005524">
    <property type="term" value="F:ATP binding"/>
    <property type="evidence" value="ECO:0007669"/>
    <property type="project" value="UniProtKB-UniRule"/>
</dbReference>
<dbReference type="GO" id="GO:0005536">
    <property type="term" value="F:D-glucose binding"/>
    <property type="evidence" value="ECO:0007669"/>
    <property type="project" value="InterPro"/>
</dbReference>
<dbReference type="GO" id="GO:0004340">
    <property type="term" value="F:glucokinase activity"/>
    <property type="evidence" value="ECO:0007669"/>
    <property type="project" value="UniProtKB-UniRule"/>
</dbReference>
<dbReference type="GO" id="GO:0006096">
    <property type="term" value="P:glycolytic process"/>
    <property type="evidence" value="ECO:0007669"/>
    <property type="project" value="UniProtKB-UniRule"/>
</dbReference>
<dbReference type="CDD" id="cd24008">
    <property type="entry name" value="ASKHA_NBD_GLK"/>
    <property type="match status" value="1"/>
</dbReference>
<dbReference type="FunFam" id="3.30.420.40:FF:000045">
    <property type="entry name" value="Glucokinase"/>
    <property type="match status" value="1"/>
</dbReference>
<dbReference type="FunFam" id="3.40.367.20:FF:000002">
    <property type="entry name" value="Glucokinase"/>
    <property type="match status" value="1"/>
</dbReference>
<dbReference type="Gene3D" id="3.30.420.40">
    <property type="match status" value="1"/>
</dbReference>
<dbReference type="Gene3D" id="3.40.367.20">
    <property type="match status" value="1"/>
</dbReference>
<dbReference type="HAMAP" id="MF_00524">
    <property type="entry name" value="Glucokinase"/>
    <property type="match status" value="1"/>
</dbReference>
<dbReference type="InterPro" id="IPR043129">
    <property type="entry name" value="ATPase_NBD"/>
</dbReference>
<dbReference type="InterPro" id="IPR050201">
    <property type="entry name" value="Bacterial_glucokinase"/>
</dbReference>
<dbReference type="InterPro" id="IPR003836">
    <property type="entry name" value="Glucokinase"/>
</dbReference>
<dbReference type="NCBIfam" id="TIGR00749">
    <property type="entry name" value="glk"/>
    <property type="match status" value="1"/>
</dbReference>
<dbReference type="NCBIfam" id="NF001414">
    <property type="entry name" value="PRK00292.1-1"/>
    <property type="match status" value="1"/>
</dbReference>
<dbReference type="NCBIfam" id="NF001416">
    <property type="entry name" value="PRK00292.1-3"/>
    <property type="match status" value="1"/>
</dbReference>
<dbReference type="PANTHER" id="PTHR47690">
    <property type="entry name" value="GLUCOKINASE"/>
    <property type="match status" value="1"/>
</dbReference>
<dbReference type="PANTHER" id="PTHR47690:SF1">
    <property type="entry name" value="GLUCOKINASE"/>
    <property type="match status" value="1"/>
</dbReference>
<dbReference type="Pfam" id="PF02685">
    <property type="entry name" value="Glucokinase"/>
    <property type="match status" value="1"/>
</dbReference>
<dbReference type="SUPFAM" id="SSF53067">
    <property type="entry name" value="Actin-like ATPase domain"/>
    <property type="match status" value="1"/>
</dbReference>
<accession>B5RCN1</accession>
<gene>
    <name evidence="1" type="primary">glk</name>
    <name type="ordered locus">SG2439</name>
</gene>
<comment type="catalytic activity">
    <reaction evidence="1">
        <text>D-glucose + ATP = D-glucose 6-phosphate + ADP + H(+)</text>
        <dbReference type="Rhea" id="RHEA:17825"/>
        <dbReference type="ChEBI" id="CHEBI:4167"/>
        <dbReference type="ChEBI" id="CHEBI:15378"/>
        <dbReference type="ChEBI" id="CHEBI:30616"/>
        <dbReference type="ChEBI" id="CHEBI:61548"/>
        <dbReference type="ChEBI" id="CHEBI:456216"/>
        <dbReference type="EC" id="2.7.1.2"/>
    </reaction>
</comment>
<comment type="subcellular location">
    <subcellularLocation>
        <location evidence="1">Cytoplasm</location>
    </subcellularLocation>
</comment>
<comment type="similarity">
    <text evidence="1">Belongs to the bacterial glucokinase family.</text>
</comment>
<feature type="chain" id="PRO_1000127720" description="Glucokinase">
    <location>
        <begin position="1"/>
        <end position="321"/>
    </location>
</feature>
<feature type="binding site" evidence="1">
    <location>
        <begin position="8"/>
        <end position="13"/>
    </location>
    <ligand>
        <name>ATP</name>
        <dbReference type="ChEBI" id="CHEBI:30616"/>
    </ligand>
</feature>
<reference key="1">
    <citation type="journal article" date="2008" name="Genome Res.">
        <title>Comparative genome analysis of Salmonella enteritidis PT4 and Salmonella gallinarum 287/91 provides insights into evolutionary and host adaptation pathways.</title>
        <authorList>
            <person name="Thomson N.R."/>
            <person name="Clayton D.J."/>
            <person name="Windhorst D."/>
            <person name="Vernikos G."/>
            <person name="Davidson S."/>
            <person name="Churcher C."/>
            <person name="Quail M.A."/>
            <person name="Stevens M."/>
            <person name="Jones M.A."/>
            <person name="Watson M."/>
            <person name="Barron A."/>
            <person name="Layton A."/>
            <person name="Pickard D."/>
            <person name="Kingsley R.A."/>
            <person name="Bignell A."/>
            <person name="Clark L."/>
            <person name="Harris B."/>
            <person name="Ormond D."/>
            <person name="Abdellah Z."/>
            <person name="Brooks K."/>
            <person name="Cherevach I."/>
            <person name="Chillingworth T."/>
            <person name="Woodward J."/>
            <person name="Norberczak H."/>
            <person name="Lord A."/>
            <person name="Arrowsmith C."/>
            <person name="Jagels K."/>
            <person name="Moule S."/>
            <person name="Mungall K."/>
            <person name="Saunders M."/>
            <person name="Whitehead S."/>
            <person name="Chabalgoity J.A."/>
            <person name="Maskell D."/>
            <person name="Humphreys T."/>
            <person name="Roberts M."/>
            <person name="Barrow P.A."/>
            <person name="Dougan G."/>
            <person name="Parkhill J."/>
        </authorList>
    </citation>
    <scope>NUCLEOTIDE SEQUENCE [LARGE SCALE GENOMIC DNA]</scope>
    <source>
        <strain>287/91 / NCTC 13346</strain>
    </source>
</reference>
<organism>
    <name type="scientific">Salmonella gallinarum (strain 287/91 / NCTC 13346)</name>
    <dbReference type="NCBI Taxonomy" id="550538"/>
    <lineage>
        <taxon>Bacteria</taxon>
        <taxon>Pseudomonadati</taxon>
        <taxon>Pseudomonadota</taxon>
        <taxon>Gammaproteobacteria</taxon>
        <taxon>Enterobacterales</taxon>
        <taxon>Enterobacteriaceae</taxon>
        <taxon>Salmonella</taxon>
    </lineage>
</organism>
<protein>
    <recommendedName>
        <fullName evidence="1">Glucokinase</fullName>
        <ecNumber evidence="1">2.7.1.2</ecNumber>
    </recommendedName>
    <alternativeName>
        <fullName evidence="1">Glucose kinase</fullName>
    </alternativeName>
</protein>
<evidence type="ECO:0000255" key="1">
    <source>
        <dbReference type="HAMAP-Rule" id="MF_00524"/>
    </source>
</evidence>
<name>GLK_SALG2</name>